<gene>
    <name evidence="1" type="primary">dapB</name>
    <name type="ordered locus">NFA_38810</name>
</gene>
<accession>Q5YSW2</accession>
<name>DAPB_NOCFA</name>
<dbReference type="EC" id="1.17.1.8" evidence="1"/>
<dbReference type="EMBL" id="AP006618">
    <property type="protein sequence ID" value="BAD58729.1"/>
    <property type="molecule type" value="Genomic_DNA"/>
</dbReference>
<dbReference type="RefSeq" id="WP_011210414.1">
    <property type="nucleotide sequence ID" value="NC_006361.1"/>
</dbReference>
<dbReference type="SMR" id="Q5YSW2"/>
<dbReference type="STRING" id="247156.NFA_38810"/>
<dbReference type="GeneID" id="61134566"/>
<dbReference type="KEGG" id="nfa:NFA_38810"/>
<dbReference type="eggNOG" id="COG0289">
    <property type="taxonomic scope" value="Bacteria"/>
</dbReference>
<dbReference type="HOGENOM" id="CLU_047479_0_1_11"/>
<dbReference type="OrthoDB" id="9790352at2"/>
<dbReference type="UniPathway" id="UPA00034">
    <property type="reaction ID" value="UER00018"/>
</dbReference>
<dbReference type="Proteomes" id="UP000006820">
    <property type="component" value="Chromosome"/>
</dbReference>
<dbReference type="GO" id="GO:0005829">
    <property type="term" value="C:cytosol"/>
    <property type="evidence" value="ECO:0007669"/>
    <property type="project" value="TreeGrafter"/>
</dbReference>
<dbReference type="GO" id="GO:0008839">
    <property type="term" value="F:4-hydroxy-tetrahydrodipicolinate reductase"/>
    <property type="evidence" value="ECO:0007669"/>
    <property type="project" value="UniProtKB-EC"/>
</dbReference>
<dbReference type="GO" id="GO:0051287">
    <property type="term" value="F:NAD binding"/>
    <property type="evidence" value="ECO:0007669"/>
    <property type="project" value="UniProtKB-UniRule"/>
</dbReference>
<dbReference type="GO" id="GO:0050661">
    <property type="term" value="F:NADP binding"/>
    <property type="evidence" value="ECO:0007669"/>
    <property type="project" value="UniProtKB-UniRule"/>
</dbReference>
<dbReference type="GO" id="GO:0016726">
    <property type="term" value="F:oxidoreductase activity, acting on CH or CH2 groups, NAD or NADP as acceptor"/>
    <property type="evidence" value="ECO:0007669"/>
    <property type="project" value="UniProtKB-UniRule"/>
</dbReference>
<dbReference type="GO" id="GO:0019877">
    <property type="term" value="P:diaminopimelate biosynthetic process"/>
    <property type="evidence" value="ECO:0007669"/>
    <property type="project" value="UniProtKB-UniRule"/>
</dbReference>
<dbReference type="GO" id="GO:0009089">
    <property type="term" value="P:lysine biosynthetic process via diaminopimelate"/>
    <property type="evidence" value="ECO:0007669"/>
    <property type="project" value="UniProtKB-UniRule"/>
</dbReference>
<dbReference type="CDD" id="cd02274">
    <property type="entry name" value="DHDPR_N"/>
    <property type="match status" value="1"/>
</dbReference>
<dbReference type="FunFam" id="3.30.360.10:FF:000009">
    <property type="entry name" value="4-hydroxy-tetrahydrodipicolinate reductase"/>
    <property type="match status" value="1"/>
</dbReference>
<dbReference type="Gene3D" id="3.30.360.10">
    <property type="entry name" value="Dihydrodipicolinate Reductase, domain 2"/>
    <property type="match status" value="1"/>
</dbReference>
<dbReference type="Gene3D" id="3.40.50.720">
    <property type="entry name" value="NAD(P)-binding Rossmann-like Domain"/>
    <property type="match status" value="1"/>
</dbReference>
<dbReference type="HAMAP" id="MF_00102">
    <property type="entry name" value="DapB"/>
    <property type="match status" value="1"/>
</dbReference>
<dbReference type="InterPro" id="IPR022663">
    <property type="entry name" value="DapB_C"/>
</dbReference>
<dbReference type="InterPro" id="IPR000846">
    <property type="entry name" value="DapB_N"/>
</dbReference>
<dbReference type="InterPro" id="IPR022664">
    <property type="entry name" value="DapB_N_CS"/>
</dbReference>
<dbReference type="InterPro" id="IPR023940">
    <property type="entry name" value="DHDPR_bac"/>
</dbReference>
<dbReference type="InterPro" id="IPR036291">
    <property type="entry name" value="NAD(P)-bd_dom_sf"/>
</dbReference>
<dbReference type="NCBIfam" id="TIGR00036">
    <property type="entry name" value="dapB"/>
    <property type="match status" value="1"/>
</dbReference>
<dbReference type="PANTHER" id="PTHR20836:SF0">
    <property type="entry name" value="4-HYDROXY-TETRAHYDRODIPICOLINATE REDUCTASE 1, CHLOROPLASTIC-RELATED"/>
    <property type="match status" value="1"/>
</dbReference>
<dbReference type="PANTHER" id="PTHR20836">
    <property type="entry name" value="DIHYDRODIPICOLINATE REDUCTASE"/>
    <property type="match status" value="1"/>
</dbReference>
<dbReference type="Pfam" id="PF05173">
    <property type="entry name" value="DapB_C"/>
    <property type="match status" value="1"/>
</dbReference>
<dbReference type="Pfam" id="PF01113">
    <property type="entry name" value="DapB_N"/>
    <property type="match status" value="1"/>
</dbReference>
<dbReference type="PIRSF" id="PIRSF000161">
    <property type="entry name" value="DHPR"/>
    <property type="match status" value="1"/>
</dbReference>
<dbReference type="SUPFAM" id="SSF55347">
    <property type="entry name" value="Glyceraldehyde-3-phosphate dehydrogenase-like, C-terminal domain"/>
    <property type="match status" value="1"/>
</dbReference>
<dbReference type="SUPFAM" id="SSF51735">
    <property type="entry name" value="NAD(P)-binding Rossmann-fold domains"/>
    <property type="match status" value="1"/>
</dbReference>
<dbReference type="PROSITE" id="PS01298">
    <property type="entry name" value="DAPB"/>
    <property type="match status" value="1"/>
</dbReference>
<sequence length="248" mass="26040">MTIRVGVLGARGKVGQAICAAVRAADDLELVAEVDKGDALETFTETGTEVVVDFTHPDVVMGNLKFLVEHGIHAVVGTTGFDAARLDEVRGWLAASPATGVLIAPNFAIGAVLSMRFAEQAARFFESVEVIELHHPNKADAPSGTAYRTAGLIAEARNRAGVGRSPDATSTELDGARGADVDGVRVHSVRLAGLVAHQEVLFGTQGETLTIRHDSIDRSSFAPGVLLGVREIGKRPGLTVGLDPFLDL</sequence>
<organism>
    <name type="scientific">Nocardia farcinica (strain IFM 10152)</name>
    <dbReference type="NCBI Taxonomy" id="247156"/>
    <lineage>
        <taxon>Bacteria</taxon>
        <taxon>Bacillati</taxon>
        <taxon>Actinomycetota</taxon>
        <taxon>Actinomycetes</taxon>
        <taxon>Mycobacteriales</taxon>
        <taxon>Nocardiaceae</taxon>
        <taxon>Nocardia</taxon>
    </lineage>
</organism>
<feature type="chain" id="PRO_0000228367" description="4-hydroxy-tetrahydrodipicolinate reductase">
    <location>
        <begin position="1"/>
        <end position="248"/>
    </location>
</feature>
<feature type="active site" description="Proton donor/acceptor" evidence="1">
    <location>
        <position position="134"/>
    </location>
</feature>
<feature type="active site" description="Proton donor" evidence="1">
    <location>
        <position position="138"/>
    </location>
</feature>
<feature type="binding site" evidence="1">
    <location>
        <begin position="9"/>
        <end position="14"/>
    </location>
    <ligand>
        <name>NAD(+)</name>
        <dbReference type="ChEBI" id="CHEBI:57540"/>
    </ligand>
</feature>
<feature type="binding site" evidence="1">
    <location>
        <begin position="77"/>
        <end position="79"/>
    </location>
    <ligand>
        <name>NAD(+)</name>
        <dbReference type="ChEBI" id="CHEBI:57540"/>
    </ligand>
</feature>
<feature type="binding site" evidence="1">
    <location>
        <begin position="104"/>
        <end position="107"/>
    </location>
    <ligand>
        <name>NAD(+)</name>
        <dbReference type="ChEBI" id="CHEBI:57540"/>
    </ligand>
</feature>
<feature type="binding site" evidence="1">
    <location>
        <position position="135"/>
    </location>
    <ligand>
        <name>(S)-2,3,4,5-tetrahydrodipicolinate</name>
        <dbReference type="ChEBI" id="CHEBI:16845"/>
    </ligand>
</feature>
<feature type="binding site" evidence="1">
    <location>
        <begin position="144"/>
        <end position="145"/>
    </location>
    <ligand>
        <name>(S)-2,3,4,5-tetrahydrodipicolinate</name>
        <dbReference type="ChEBI" id="CHEBI:16845"/>
    </ligand>
</feature>
<comment type="function">
    <text evidence="1">Catalyzes the conversion of 4-hydroxy-tetrahydrodipicolinate (HTPA) to tetrahydrodipicolinate.</text>
</comment>
<comment type="catalytic activity">
    <reaction evidence="1">
        <text>(S)-2,3,4,5-tetrahydrodipicolinate + NAD(+) + H2O = (2S,4S)-4-hydroxy-2,3,4,5-tetrahydrodipicolinate + NADH + H(+)</text>
        <dbReference type="Rhea" id="RHEA:35323"/>
        <dbReference type="ChEBI" id="CHEBI:15377"/>
        <dbReference type="ChEBI" id="CHEBI:15378"/>
        <dbReference type="ChEBI" id="CHEBI:16845"/>
        <dbReference type="ChEBI" id="CHEBI:57540"/>
        <dbReference type="ChEBI" id="CHEBI:57945"/>
        <dbReference type="ChEBI" id="CHEBI:67139"/>
        <dbReference type="EC" id="1.17.1.8"/>
    </reaction>
</comment>
<comment type="catalytic activity">
    <reaction evidence="1">
        <text>(S)-2,3,4,5-tetrahydrodipicolinate + NADP(+) + H2O = (2S,4S)-4-hydroxy-2,3,4,5-tetrahydrodipicolinate + NADPH + H(+)</text>
        <dbReference type="Rhea" id="RHEA:35331"/>
        <dbReference type="ChEBI" id="CHEBI:15377"/>
        <dbReference type="ChEBI" id="CHEBI:15378"/>
        <dbReference type="ChEBI" id="CHEBI:16845"/>
        <dbReference type="ChEBI" id="CHEBI:57783"/>
        <dbReference type="ChEBI" id="CHEBI:58349"/>
        <dbReference type="ChEBI" id="CHEBI:67139"/>
        <dbReference type="EC" id="1.17.1.8"/>
    </reaction>
</comment>
<comment type="pathway">
    <text evidence="1">Amino-acid biosynthesis; L-lysine biosynthesis via DAP pathway; (S)-tetrahydrodipicolinate from L-aspartate: step 4/4.</text>
</comment>
<comment type="subcellular location">
    <subcellularLocation>
        <location evidence="1">Cytoplasm</location>
    </subcellularLocation>
</comment>
<comment type="similarity">
    <text evidence="1">Belongs to the DapB family.</text>
</comment>
<comment type="caution">
    <text evidence="2">Was originally thought to be a dihydrodipicolinate reductase (DHDPR), catalyzing the conversion of dihydrodipicolinate to tetrahydrodipicolinate. However, it was shown in E.coli that the substrate of the enzymatic reaction is not dihydrodipicolinate (DHDP) but in fact (2S,4S)-4-hydroxy-2,3,4,5-tetrahydrodipicolinic acid (HTPA), the product released by the DapA-catalyzed reaction.</text>
</comment>
<evidence type="ECO:0000255" key="1">
    <source>
        <dbReference type="HAMAP-Rule" id="MF_00102"/>
    </source>
</evidence>
<evidence type="ECO:0000305" key="2"/>
<protein>
    <recommendedName>
        <fullName evidence="1">4-hydroxy-tetrahydrodipicolinate reductase</fullName>
        <shortName evidence="1">HTPA reductase</shortName>
        <ecNumber evidence="1">1.17.1.8</ecNumber>
    </recommendedName>
</protein>
<keyword id="KW-0028">Amino-acid biosynthesis</keyword>
<keyword id="KW-0963">Cytoplasm</keyword>
<keyword id="KW-0220">Diaminopimelate biosynthesis</keyword>
<keyword id="KW-0457">Lysine biosynthesis</keyword>
<keyword id="KW-0520">NAD</keyword>
<keyword id="KW-0521">NADP</keyword>
<keyword id="KW-0560">Oxidoreductase</keyword>
<keyword id="KW-1185">Reference proteome</keyword>
<reference key="1">
    <citation type="journal article" date="2004" name="Proc. Natl. Acad. Sci. U.S.A.">
        <title>The complete genomic sequence of Nocardia farcinica IFM 10152.</title>
        <authorList>
            <person name="Ishikawa J."/>
            <person name="Yamashita A."/>
            <person name="Mikami Y."/>
            <person name="Hoshino Y."/>
            <person name="Kurita H."/>
            <person name="Hotta K."/>
            <person name="Shiba T."/>
            <person name="Hattori M."/>
        </authorList>
    </citation>
    <scope>NUCLEOTIDE SEQUENCE [LARGE SCALE GENOMIC DNA]</scope>
    <source>
        <strain>IFM 10152</strain>
    </source>
</reference>
<proteinExistence type="inferred from homology"/>